<protein>
    <recommendedName>
        <fullName evidence="5">C6 finger domain transcription factor hasF</fullName>
    </recommendedName>
    <alternativeName>
        <fullName evidence="5">Hexadehydro-astechrome biosynthesis cluster protein F</fullName>
    </alternativeName>
</protein>
<evidence type="ECO:0000255" key="1">
    <source>
        <dbReference type="PROSITE-ProRule" id="PRU00227"/>
    </source>
</evidence>
<evidence type="ECO:0000256" key="2">
    <source>
        <dbReference type="SAM" id="MobiDB-lite"/>
    </source>
</evidence>
<evidence type="ECO:0000269" key="3">
    <source>
    </source>
</evidence>
<evidence type="ECO:0000269" key="4">
    <source>
    </source>
</evidence>
<evidence type="ECO:0000303" key="5">
    <source>
    </source>
</evidence>
<reference key="1">
    <citation type="journal article" date="2008" name="PLoS Genet.">
        <title>Genomic islands in the pathogenic filamentous fungus Aspergillus fumigatus.</title>
        <authorList>
            <person name="Fedorova N.D."/>
            <person name="Khaldi N."/>
            <person name="Joardar V.S."/>
            <person name="Maiti R."/>
            <person name="Amedeo P."/>
            <person name="Anderson M.J."/>
            <person name="Crabtree J."/>
            <person name="Silva J.C."/>
            <person name="Badger J.H."/>
            <person name="Albarraq A."/>
            <person name="Angiuoli S."/>
            <person name="Bussey H."/>
            <person name="Bowyer P."/>
            <person name="Cotty P.J."/>
            <person name="Dyer P.S."/>
            <person name="Egan A."/>
            <person name="Galens K."/>
            <person name="Fraser-Liggett C.M."/>
            <person name="Haas B.J."/>
            <person name="Inman J.M."/>
            <person name="Kent R."/>
            <person name="Lemieux S."/>
            <person name="Malavazi I."/>
            <person name="Orvis J."/>
            <person name="Roemer T."/>
            <person name="Ronning C.M."/>
            <person name="Sundaram J.P."/>
            <person name="Sutton G."/>
            <person name="Turner G."/>
            <person name="Venter J.C."/>
            <person name="White O.R."/>
            <person name="Whitty B.R."/>
            <person name="Youngman P."/>
            <person name="Wolfe K.H."/>
            <person name="Goldman G.H."/>
            <person name="Wortman J.R."/>
            <person name="Jiang B."/>
            <person name="Denning D.W."/>
            <person name="Nierman W.C."/>
        </authorList>
    </citation>
    <scope>NUCLEOTIDE SEQUENCE [LARGE SCALE GENOMIC DNA]</scope>
    <source>
        <strain>CBS 144.89 / FGSC A1163 / CEA10</strain>
    </source>
</reference>
<reference key="2">
    <citation type="journal article" date="2013" name="J. Am. Chem. Soc.">
        <title>A nonribosomal peptide synthetase-derived iron(III) complex from the pathogenic fungus Aspergillus fumigatus.</title>
        <authorList>
            <person name="Yin W.B."/>
            <person name="Baccile J.A."/>
            <person name="Bok J.W."/>
            <person name="Chen Y."/>
            <person name="Keller N.P."/>
            <person name="Schroeder F.C."/>
        </authorList>
    </citation>
    <scope>FUNCTION</scope>
    <scope>DISRUPTION PHENOTYPE</scope>
</reference>
<reference key="3">
    <citation type="journal article" date="2022" name="J. Fungi">
        <title>Stress responses elicited by glucose withdrawal in Aspergillus fumigatus.</title>
        <authorList>
            <person name="Emri T."/>
            <person name="Antal K."/>
            <person name="Gila B."/>
            <person name="Jonas A.P."/>
            <person name="Pocsi I."/>
        </authorList>
    </citation>
    <scope>INDUCTION</scope>
</reference>
<feature type="chain" id="PRO_0000461225" description="C6 finger domain transcription factor hasF">
    <location>
        <begin position="1"/>
        <end position="763"/>
    </location>
</feature>
<feature type="DNA-binding region" description="Zn(2)-C6 fungal-type" evidence="1">
    <location>
        <begin position="34"/>
        <end position="61"/>
    </location>
</feature>
<feature type="region of interest" description="Disordered" evidence="2">
    <location>
        <begin position="1"/>
        <end position="25"/>
    </location>
</feature>
<feature type="region of interest" description="Disordered" evidence="2">
    <location>
        <begin position="68"/>
        <end position="91"/>
    </location>
</feature>
<feature type="region of interest" description="Disordered" evidence="2">
    <location>
        <begin position="112"/>
        <end position="145"/>
    </location>
</feature>
<feature type="region of interest" description="Disordered" evidence="2">
    <location>
        <begin position="189"/>
        <end position="219"/>
    </location>
</feature>
<feature type="compositionally biased region" description="Low complexity" evidence="2">
    <location>
        <begin position="1"/>
        <end position="20"/>
    </location>
</feature>
<feature type="compositionally biased region" description="Polar residues" evidence="2">
    <location>
        <begin position="80"/>
        <end position="89"/>
    </location>
</feature>
<feature type="compositionally biased region" description="Pro residues" evidence="2">
    <location>
        <begin position="197"/>
        <end position="209"/>
    </location>
</feature>
<gene>
    <name evidence="5" type="primary">hasF</name>
    <name type="ORF">AFUB_036250</name>
</gene>
<comment type="function">
    <text evidence="3">Transcription factor; part of the gene cluster that mediates the biosynthesis of hexadehydro-astechrome (HAS), a tryptophan-derived iron(III)-complex that acts as a virulence factor in infected mice (PubMed:23360537). Does not regulate the expression of the HAS biosynthetic genes (at least under the growth conditions tested) (PubMed:23360537).</text>
</comment>
<comment type="subcellular location">
    <subcellularLocation>
        <location evidence="1">Nucleus</location>
    </subcellularLocation>
</comment>
<comment type="induction">
    <text evidence="4">The expression of the hexadehydro-astechrome cluster is induced by glucose.</text>
</comment>
<comment type="disruption phenotype">
    <text evidence="3">Does not affect the production of hexadehydro-astechromein the laboratory conditions tested.</text>
</comment>
<proteinExistence type="evidence at transcript level"/>
<keyword id="KW-0238">DNA-binding</keyword>
<keyword id="KW-0479">Metal-binding</keyword>
<keyword id="KW-0539">Nucleus</keyword>
<keyword id="KW-0804">Transcription</keyword>
<keyword id="KW-0805">Transcription regulation</keyword>
<keyword id="KW-0843">Virulence</keyword>
<keyword id="KW-0862">Zinc</keyword>
<dbReference type="EMBL" id="DS499596">
    <property type="protein sequence ID" value="EDP52459.1"/>
    <property type="molecule type" value="Genomic_DNA"/>
</dbReference>
<dbReference type="EnsemblFungi" id="EDP52459">
    <property type="protein sequence ID" value="EDP52459"/>
    <property type="gene ID" value="AFUB_036250"/>
</dbReference>
<dbReference type="HOGENOM" id="CLU_004083_7_2_1"/>
<dbReference type="OrthoDB" id="58428at5052"/>
<dbReference type="PhylomeDB" id="B0XWK6"/>
<dbReference type="Proteomes" id="UP000001699">
    <property type="component" value="Unassembled WGS sequence"/>
</dbReference>
<dbReference type="GO" id="GO:0005634">
    <property type="term" value="C:nucleus"/>
    <property type="evidence" value="ECO:0007669"/>
    <property type="project" value="UniProtKB-SubCell"/>
</dbReference>
<dbReference type="GO" id="GO:0003677">
    <property type="term" value="F:DNA binding"/>
    <property type="evidence" value="ECO:0007669"/>
    <property type="project" value="UniProtKB-KW"/>
</dbReference>
<dbReference type="GO" id="GO:0000981">
    <property type="term" value="F:DNA-binding transcription factor activity, RNA polymerase II-specific"/>
    <property type="evidence" value="ECO:0007669"/>
    <property type="project" value="InterPro"/>
</dbReference>
<dbReference type="GO" id="GO:0008270">
    <property type="term" value="F:zinc ion binding"/>
    <property type="evidence" value="ECO:0007669"/>
    <property type="project" value="InterPro"/>
</dbReference>
<dbReference type="GO" id="GO:0006351">
    <property type="term" value="P:DNA-templated transcription"/>
    <property type="evidence" value="ECO:0007669"/>
    <property type="project" value="InterPro"/>
</dbReference>
<dbReference type="CDD" id="cd12148">
    <property type="entry name" value="fungal_TF_MHR"/>
    <property type="match status" value="1"/>
</dbReference>
<dbReference type="CDD" id="cd00067">
    <property type="entry name" value="GAL4"/>
    <property type="match status" value="1"/>
</dbReference>
<dbReference type="Gene3D" id="4.10.240.10">
    <property type="entry name" value="Zn(2)-C6 fungal-type DNA-binding domain"/>
    <property type="match status" value="1"/>
</dbReference>
<dbReference type="InterPro" id="IPR050613">
    <property type="entry name" value="Sec_Metabolite_Reg"/>
</dbReference>
<dbReference type="InterPro" id="IPR007219">
    <property type="entry name" value="Transcription_factor_dom_fun"/>
</dbReference>
<dbReference type="InterPro" id="IPR036864">
    <property type="entry name" value="Zn2-C6_fun-type_DNA-bd_sf"/>
</dbReference>
<dbReference type="InterPro" id="IPR001138">
    <property type="entry name" value="Zn2Cys6_DnaBD"/>
</dbReference>
<dbReference type="PANTHER" id="PTHR31001:SF77">
    <property type="entry name" value="TRANSCRIPTION FACTOR, PUTATIVE (AFU_ORTHOLOGUE AFUA_3G12940)-RELATED"/>
    <property type="match status" value="1"/>
</dbReference>
<dbReference type="PANTHER" id="PTHR31001">
    <property type="entry name" value="UNCHARACTERIZED TRANSCRIPTIONAL REGULATORY PROTEIN"/>
    <property type="match status" value="1"/>
</dbReference>
<dbReference type="Pfam" id="PF04082">
    <property type="entry name" value="Fungal_trans"/>
    <property type="match status" value="1"/>
</dbReference>
<dbReference type="Pfam" id="PF00172">
    <property type="entry name" value="Zn_clus"/>
    <property type="match status" value="1"/>
</dbReference>
<dbReference type="SMART" id="SM00906">
    <property type="entry name" value="Fungal_trans"/>
    <property type="match status" value="1"/>
</dbReference>
<dbReference type="SMART" id="SM00066">
    <property type="entry name" value="GAL4"/>
    <property type="match status" value="1"/>
</dbReference>
<dbReference type="SUPFAM" id="SSF57701">
    <property type="entry name" value="Zn2/Cys6 DNA-binding domain"/>
    <property type="match status" value="1"/>
</dbReference>
<dbReference type="PROSITE" id="PS00463">
    <property type="entry name" value="ZN2_CY6_FUNGAL_1"/>
    <property type="match status" value="1"/>
</dbReference>
<dbReference type="PROSITE" id="PS50048">
    <property type="entry name" value="ZN2_CY6_FUNGAL_2"/>
    <property type="match status" value="1"/>
</dbReference>
<name>HASF_ASPFC</name>
<accession>B0XWK6</accession>
<organism>
    <name type="scientific">Aspergillus fumigatus (strain CBS 144.89 / FGSC A1163 / CEA10)</name>
    <name type="common">Neosartorya fumigata</name>
    <dbReference type="NCBI Taxonomy" id="451804"/>
    <lineage>
        <taxon>Eukaryota</taxon>
        <taxon>Fungi</taxon>
        <taxon>Dikarya</taxon>
        <taxon>Ascomycota</taxon>
        <taxon>Pezizomycotina</taxon>
        <taxon>Eurotiomycetes</taxon>
        <taxon>Eurotiomycetidae</taxon>
        <taxon>Eurotiales</taxon>
        <taxon>Aspergillaceae</taxon>
        <taxon>Aspergillus</taxon>
        <taxon>Aspergillus subgen. Fumigati</taxon>
    </lineage>
</organism>
<sequence>MDSTTSSSRFSVSSPQSGPSAGIQKGRQRTITACLTCRRRKVKCDHAQPVCTPCQRGGRVCTYVTPQPVSQAPSRVGTGSRVSRTNLRSGQEEIRSRLERLEKLLERAISGGGNMSILPDAKGTSTGSPSDVDQGGNALPNPKCETLSADGYDGALLLEAEGGQSRWVSSLHYALLADEIHDVKMLLGDQSSGAPADSPPSDQPTPPFPFSGSTVESLTPWSPKSAEDCLALLEIFYSNVDPMTRLVHKPTLQRRFTQYINHTYGTRTQSPGVEEAADASRPDHTIHAFEPLALAIFYSAINSLSAEDVMMRFAAEKDALLAQFQRGVELGLGREDFLTTPSIEVLQAFVLLLTCQSREDDMSRTWTLLGLVVRMALSQGLHREPSLFPSSNMDVVQVETRRRLWHQICHLDFRSAEGRGQEPTIADEDYTTLLPRNINDEDLIEGAHPTAETYSPPGFTDMTGHLIRLHGIHCFRRIVRSTYRLERRIKSSVANGNGNLYPIAELQSLFVEVRTMVDEMVNHLQTQYLQYCDPQIPHQRMALGLAAVIEWRCWSIFWLRTPKQYREAVVSPEIRQTVLAKSVSLVESLNMMSDDKDAQKFQWHIGGHACFQSIMHIVSELETPEFQAANHRSLRSRALSVLKRTMDTRGHEVTPMWNVINRIISNCLAKNAPSTFPLSPFQAMFPPNAAIPGLGSSTTVPPQTIAQNSSVSGGSAMATPLPDLSEVGSLDMQDPTLAFDWVSESNALMRRSPLMFWVGVLEL</sequence>